<evidence type="ECO:0000250" key="1">
    <source>
        <dbReference type="UniProtKB" id="P62273"/>
    </source>
</evidence>
<evidence type="ECO:0000250" key="2">
    <source>
        <dbReference type="UniProtKB" id="Q6QAP6"/>
    </source>
</evidence>
<evidence type="ECO:0000255" key="3"/>
<evidence type="ECO:0000269" key="4">
    <source>
    </source>
</evidence>
<evidence type="ECO:0000305" key="5"/>
<evidence type="ECO:0000305" key="6">
    <source>
    </source>
</evidence>
<proteinExistence type="evidence at protein level"/>
<dbReference type="EMBL" id="AE014297">
    <property type="protein sequence ID" value="AAF54450.1"/>
    <property type="molecule type" value="Genomic_DNA"/>
</dbReference>
<dbReference type="EMBL" id="AY075533">
    <property type="protein sequence ID" value="AAL68340.2"/>
    <property type="status" value="ALT_INIT"/>
    <property type="molecule type" value="mRNA"/>
</dbReference>
<dbReference type="RefSeq" id="NP_649946.1">
    <property type="nucleotide sequence ID" value="NM_141689.3"/>
</dbReference>
<dbReference type="RefSeq" id="NP_731407.2">
    <property type="nucleotide sequence ID" value="NM_169311.2"/>
</dbReference>
<dbReference type="PDB" id="4V6W">
    <property type="method" value="EM"/>
    <property type="resolution" value="6.00 A"/>
    <property type="chains" value="Ad=1-56"/>
</dbReference>
<dbReference type="PDB" id="6XU6">
    <property type="method" value="EM"/>
    <property type="resolution" value="3.50 A"/>
    <property type="chains" value="Ad=5-56"/>
</dbReference>
<dbReference type="PDB" id="6XU7">
    <property type="method" value="EM"/>
    <property type="resolution" value="4.90 A"/>
    <property type="chains" value="Ad=5-56"/>
</dbReference>
<dbReference type="PDB" id="6XU8">
    <property type="method" value="EM"/>
    <property type="resolution" value="3.00 A"/>
    <property type="chains" value="Ad=5-56"/>
</dbReference>
<dbReference type="PDBsum" id="4V6W"/>
<dbReference type="PDBsum" id="6XU6"/>
<dbReference type="PDBsum" id="6XU7"/>
<dbReference type="PDBsum" id="6XU8"/>
<dbReference type="EMDB" id="EMD-10622"/>
<dbReference type="EMDB" id="EMD-10623"/>
<dbReference type="EMDB" id="EMD-10624"/>
<dbReference type="SMR" id="Q9VH69"/>
<dbReference type="BioGRID" id="66357">
    <property type="interactions" value="122"/>
</dbReference>
<dbReference type="FunCoup" id="Q9VH69">
    <property type="interactions" value="1050"/>
</dbReference>
<dbReference type="STRING" id="7227.FBpp0306740"/>
<dbReference type="PaxDb" id="7227-FBpp0081614"/>
<dbReference type="DNASU" id="41200"/>
<dbReference type="EnsemblMetazoa" id="FBtr0082136">
    <property type="protein sequence ID" value="FBpp0081614"/>
    <property type="gene ID" value="FBgn0261599"/>
</dbReference>
<dbReference type="EnsemblMetazoa" id="FBtr0334681">
    <property type="protein sequence ID" value="FBpp0306740"/>
    <property type="gene ID" value="FBgn0261599"/>
</dbReference>
<dbReference type="GeneID" id="41200"/>
<dbReference type="KEGG" id="dme:Dmel_CG8495"/>
<dbReference type="AGR" id="FB:FBgn0261599"/>
<dbReference type="CTD" id="6235"/>
<dbReference type="FlyBase" id="FBgn0261599">
    <property type="gene designation" value="RpS29"/>
</dbReference>
<dbReference type="VEuPathDB" id="VectorBase:FBgn0261599"/>
<dbReference type="eggNOG" id="KOG3506">
    <property type="taxonomic scope" value="Eukaryota"/>
</dbReference>
<dbReference type="GeneTree" id="ENSGT00940000170141"/>
<dbReference type="HOGENOM" id="CLU_177289_1_1_1"/>
<dbReference type="InParanoid" id="Q9VH69"/>
<dbReference type="OMA" id="HCFREIA"/>
<dbReference type="OrthoDB" id="10252683at2759"/>
<dbReference type="PhylomeDB" id="Q9VH69"/>
<dbReference type="Reactome" id="R-DME-156827">
    <property type="pathway name" value="L13a-mediated translational silencing of Ceruloplasmin expression"/>
</dbReference>
<dbReference type="Reactome" id="R-DME-1799339">
    <property type="pathway name" value="SRP-dependent cotranslational protein targeting to membrane"/>
</dbReference>
<dbReference type="Reactome" id="R-DME-72649">
    <property type="pathway name" value="Translation initiation complex formation"/>
</dbReference>
<dbReference type="Reactome" id="R-DME-72689">
    <property type="pathway name" value="Formation of a pool of free 40S subunits"/>
</dbReference>
<dbReference type="Reactome" id="R-DME-72695">
    <property type="pathway name" value="Formation of the ternary complex, and subsequently, the 43S complex"/>
</dbReference>
<dbReference type="Reactome" id="R-DME-72702">
    <property type="pathway name" value="Ribosomal scanning and start codon recognition"/>
</dbReference>
<dbReference type="Reactome" id="R-DME-72706">
    <property type="pathway name" value="GTP hydrolysis and joining of the 60S ribosomal subunit"/>
</dbReference>
<dbReference type="Reactome" id="R-DME-975956">
    <property type="pathway name" value="Nonsense Mediated Decay (NMD) independent of the Exon Junction Complex (EJC)"/>
</dbReference>
<dbReference type="Reactome" id="R-DME-975957">
    <property type="pathway name" value="Nonsense Mediated Decay (NMD) enhanced by the Exon Junction Complex (EJC)"/>
</dbReference>
<dbReference type="BioGRID-ORCS" id="41200">
    <property type="hits" value="1 hit in 1 CRISPR screen"/>
</dbReference>
<dbReference type="ChiTaRS" id="RpS29">
    <property type="organism name" value="fly"/>
</dbReference>
<dbReference type="GenomeRNAi" id="41200"/>
<dbReference type="PRO" id="PR:Q9VH69"/>
<dbReference type="Proteomes" id="UP000000803">
    <property type="component" value="Chromosome 3R"/>
</dbReference>
<dbReference type="Bgee" id="FBgn0261599">
    <property type="expression patterns" value="Expressed in adult enteroendocrine precursor cell in adult midgut (Drosophila) and 282 other cell types or tissues"/>
</dbReference>
<dbReference type="ExpressionAtlas" id="Q9VH69">
    <property type="expression patterns" value="baseline and differential"/>
</dbReference>
<dbReference type="GO" id="GO:0022626">
    <property type="term" value="C:cytosolic ribosome"/>
    <property type="evidence" value="ECO:0000314"/>
    <property type="project" value="FlyBase"/>
</dbReference>
<dbReference type="GO" id="GO:0022627">
    <property type="term" value="C:cytosolic small ribosomal subunit"/>
    <property type="evidence" value="ECO:0000314"/>
    <property type="project" value="UniProtKB"/>
</dbReference>
<dbReference type="GO" id="GO:0005840">
    <property type="term" value="C:ribosome"/>
    <property type="evidence" value="ECO:0000250"/>
    <property type="project" value="UniProtKB"/>
</dbReference>
<dbReference type="GO" id="GO:0005791">
    <property type="term" value="C:rough endoplasmic reticulum"/>
    <property type="evidence" value="ECO:0007669"/>
    <property type="project" value="UniProtKB-SubCell"/>
</dbReference>
<dbReference type="GO" id="GO:0003735">
    <property type="term" value="F:structural constituent of ribosome"/>
    <property type="evidence" value="ECO:0000314"/>
    <property type="project" value="FlyBase"/>
</dbReference>
<dbReference type="GO" id="GO:0008270">
    <property type="term" value="F:zinc ion binding"/>
    <property type="evidence" value="ECO:0000250"/>
    <property type="project" value="UniProtKB"/>
</dbReference>
<dbReference type="GO" id="GO:0002181">
    <property type="term" value="P:cytoplasmic translation"/>
    <property type="evidence" value="ECO:0000250"/>
    <property type="project" value="UniProtKB"/>
</dbReference>
<dbReference type="FunFam" id="4.10.830.10:FF:000002">
    <property type="entry name" value="40S ribosomal protein S29"/>
    <property type="match status" value="1"/>
</dbReference>
<dbReference type="Gene3D" id="4.10.830.10">
    <property type="entry name" value="30s Ribosomal Protein S14, Chain N"/>
    <property type="match status" value="1"/>
</dbReference>
<dbReference type="InterPro" id="IPR001209">
    <property type="entry name" value="Ribosomal_uS14"/>
</dbReference>
<dbReference type="InterPro" id="IPR018271">
    <property type="entry name" value="Ribosomal_uS14_CS"/>
</dbReference>
<dbReference type="InterPro" id="IPR039744">
    <property type="entry name" value="RIbosomal_uS14_euk_arc"/>
</dbReference>
<dbReference type="InterPro" id="IPR043140">
    <property type="entry name" value="Ribosomal_uS14_sf"/>
</dbReference>
<dbReference type="NCBIfam" id="NF004424">
    <property type="entry name" value="PRK05766.1"/>
    <property type="match status" value="1"/>
</dbReference>
<dbReference type="PANTHER" id="PTHR12010">
    <property type="entry name" value="40S RIBOSOMAL PROTEIN S29"/>
    <property type="match status" value="1"/>
</dbReference>
<dbReference type="PANTHER" id="PTHR12010:SF2">
    <property type="entry name" value="40S RIBOSOMAL PROTEIN S29"/>
    <property type="match status" value="1"/>
</dbReference>
<dbReference type="Pfam" id="PF00253">
    <property type="entry name" value="Ribosomal_S14"/>
    <property type="match status" value="1"/>
</dbReference>
<dbReference type="PROSITE" id="PS00527">
    <property type="entry name" value="RIBOSOMAL_S14"/>
    <property type="match status" value="1"/>
</dbReference>
<reference key="1">
    <citation type="journal article" date="2000" name="Science">
        <title>The genome sequence of Drosophila melanogaster.</title>
        <authorList>
            <person name="Adams M.D."/>
            <person name="Celniker S.E."/>
            <person name="Holt R.A."/>
            <person name="Evans C.A."/>
            <person name="Gocayne J.D."/>
            <person name="Amanatides P.G."/>
            <person name="Scherer S.E."/>
            <person name="Li P.W."/>
            <person name="Hoskins R.A."/>
            <person name="Galle R.F."/>
            <person name="George R.A."/>
            <person name="Lewis S.E."/>
            <person name="Richards S."/>
            <person name="Ashburner M."/>
            <person name="Henderson S.N."/>
            <person name="Sutton G.G."/>
            <person name="Wortman J.R."/>
            <person name="Yandell M.D."/>
            <person name="Zhang Q."/>
            <person name="Chen L.X."/>
            <person name="Brandon R.C."/>
            <person name="Rogers Y.-H.C."/>
            <person name="Blazej R.G."/>
            <person name="Champe M."/>
            <person name="Pfeiffer B.D."/>
            <person name="Wan K.H."/>
            <person name="Doyle C."/>
            <person name="Baxter E.G."/>
            <person name="Helt G."/>
            <person name="Nelson C.R."/>
            <person name="Miklos G.L.G."/>
            <person name="Abril J.F."/>
            <person name="Agbayani A."/>
            <person name="An H.-J."/>
            <person name="Andrews-Pfannkoch C."/>
            <person name="Baldwin D."/>
            <person name="Ballew R.M."/>
            <person name="Basu A."/>
            <person name="Baxendale J."/>
            <person name="Bayraktaroglu L."/>
            <person name="Beasley E.M."/>
            <person name="Beeson K.Y."/>
            <person name="Benos P.V."/>
            <person name="Berman B.P."/>
            <person name="Bhandari D."/>
            <person name="Bolshakov S."/>
            <person name="Borkova D."/>
            <person name="Botchan M.R."/>
            <person name="Bouck J."/>
            <person name="Brokstein P."/>
            <person name="Brottier P."/>
            <person name="Burtis K.C."/>
            <person name="Busam D.A."/>
            <person name="Butler H."/>
            <person name="Cadieu E."/>
            <person name="Center A."/>
            <person name="Chandra I."/>
            <person name="Cherry J.M."/>
            <person name="Cawley S."/>
            <person name="Dahlke C."/>
            <person name="Davenport L.B."/>
            <person name="Davies P."/>
            <person name="de Pablos B."/>
            <person name="Delcher A."/>
            <person name="Deng Z."/>
            <person name="Mays A.D."/>
            <person name="Dew I."/>
            <person name="Dietz S.M."/>
            <person name="Dodson K."/>
            <person name="Doup L.E."/>
            <person name="Downes M."/>
            <person name="Dugan-Rocha S."/>
            <person name="Dunkov B.C."/>
            <person name="Dunn P."/>
            <person name="Durbin K.J."/>
            <person name="Evangelista C.C."/>
            <person name="Ferraz C."/>
            <person name="Ferriera S."/>
            <person name="Fleischmann W."/>
            <person name="Fosler C."/>
            <person name="Gabrielian A.E."/>
            <person name="Garg N.S."/>
            <person name="Gelbart W.M."/>
            <person name="Glasser K."/>
            <person name="Glodek A."/>
            <person name="Gong F."/>
            <person name="Gorrell J.H."/>
            <person name="Gu Z."/>
            <person name="Guan P."/>
            <person name="Harris M."/>
            <person name="Harris N.L."/>
            <person name="Harvey D.A."/>
            <person name="Heiman T.J."/>
            <person name="Hernandez J.R."/>
            <person name="Houck J."/>
            <person name="Hostin D."/>
            <person name="Houston K.A."/>
            <person name="Howland T.J."/>
            <person name="Wei M.-H."/>
            <person name="Ibegwam C."/>
            <person name="Jalali M."/>
            <person name="Kalush F."/>
            <person name="Karpen G.H."/>
            <person name="Ke Z."/>
            <person name="Kennison J.A."/>
            <person name="Ketchum K.A."/>
            <person name="Kimmel B.E."/>
            <person name="Kodira C.D."/>
            <person name="Kraft C.L."/>
            <person name="Kravitz S."/>
            <person name="Kulp D."/>
            <person name="Lai Z."/>
            <person name="Lasko P."/>
            <person name="Lei Y."/>
            <person name="Levitsky A.A."/>
            <person name="Li J.H."/>
            <person name="Li Z."/>
            <person name="Liang Y."/>
            <person name="Lin X."/>
            <person name="Liu X."/>
            <person name="Mattei B."/>
            <person name="McIntosh T.C."/>
            <person name="McLeod M.P."/>
            <person name="McPherson D."/>
            <person name="Merkulov G."/>
            <person name="Milshina N.V."/>
            <person name="Mobarry C."/>
            <person name="Morris J."/>
            <person name="Moshrefi A."/>
            <person name="Mount S.M."/>
            <person name="Moy M."/>
            <person name="Murphy B."/>
            <person name="Murphy L."/>
            <person name="Muzny D.M."/>
            <person name="Nelson D.L."/>
            <person name="Nelson D.R."/>
            <person name="Nelson K.A."/>
            <person name="Nixon K."/>
            <person name="Nusskern D.R."/>
            <person name="Pacleb J.M."/>
            <person name="Palazzolo M."/>
            <person name="Pittman G.S."/>
            <person name="Pan S."/>
            <person name="Pollard J."/>
            <person name="Puri V."/>
            <person name="Reese M.G."/>
            <person name="Reinert K."/>
            <person name="Remington K."/>
            <person name="Saunders R.D.C."/>
            <person name="Scheeler F."/>
            <person name="Shen H."/>
            <person name="Shue B.C."/>
            <person name="Siden-Kiamos I."/>
            <person name="Simpson M."/>
            <person name="Skupski M.P."/>
            <person name="Smith T.J."/>
            <person name="Spier E."/>
            <person name="Spradling A.C."/>
            <person name="Stapleton M."/>
            <person name="Strong R."/>
            <person name="Sun E."/>
            <person name="Svirskas R."/>
            <person name="Tector C."/>
            <person name="Turner R."/>
            <person name="Venter E."/>
            <person name="Wang A.H."/>
            <person name="Wang X."/>
            <person name="Wang Z.-Y."/>
            <person name="Wassarman D.A."/>
            <person name="Weinstock G.M."/>
            <person name="Weissenbach J."/>
            <person name="Williams S.M."/>
            <person name="Woodage T."/>
            <person name="Worley K.C."/>
            <person name="Wu D."/>
            <person name="Yang S."/>
            <person name="Yao Q.A."/>
            <person name="Ye J."/>
            <person name="Yeh R.-F."/>
            <person name="Zaveri J.S."/>
            <person name="Zhan M."/>
            <person name="Zhang G."/>
            <person name="Zhao Q."/>
            <person name="Zheng L."/>
            <person name="Zheng X.H."/>
            <person name="Zhong F.N."/>
            <person name="Zhong W."/>
            <person name="Zhou X."/>
            <person name="Zhu S.C."/>
            <person name="Zhu X."/>
            <person name="Smith H.O."/>
            <person name="Gibbs R.A."/>
            <person name="Myers E.W."/>
            <person name="Rubin G.M."/>
            <person name="Venter J.C."/>
        </authorList>
    </citation>
    <scope>NUCLEOTIDE SEQUENCE [LARGE SCALE GENOMIC DNA]</scope>
    <source>
        <strain>Berkeley</strain>
    </source>
</reference>
<reference key="2">
    <citation type="journal article" date="2002" name="Genome Biol.">
        <title>Annotation of the Drosophila melanogaster euchromatic genome: a systematic review.</title>
        <authorList>
            <person name="Misra S."/>
            <person name="Crosby M.A."/>
            <person name="Mungall C.J."/>
            <person name="Matthews B.B."/>
            <person name="Campbell K.S."/>
            <person name="Hradecky P."/>
            <person name="Huang Y."/>
            <person name="Kaminker J.S."/>
            <person name="Millburn G.H."/>
            <person name="Prochnik S.E."/>
            <person name="Smith C.D."/>
            <person name="Tupy J.L."/>
            <person name="Whitfield E.J."/>
            <person name="Bayraktaroglu L."/>
            <person name="Berman B.P."/>
            <person name="Bettencourt B.R."/>
            <person name="Celniker S.E."/>
            <person name="de Grey A.D.N.J."/>
            <person name="Drysdale R.A."/>
            <person name="Harris N.L."/>
            <person name="Richter J."/>
            <person name="Russo S."/>
            <person name="Schroeder A.J."/>
            <person name="Shu S.Q."/>
            <person name="Stapleton M."/>
            <person name="Yamada C."/>
            <person name="Ashburner M."/>
            <person name="Gelbart W.M."/>
            <person name="Rubin G.M."/>
            <person name="Lewis S.E."/>
        </authorList>
    </citation>
    <scope>GENOME REANNOTATION</scope>
    <source>
        <strain>Berkeley</strain>
    </source>
</reference>
<reference key="3">
    <citation type="journal article" date="2002" name="Genome Biol.">
        <title>A Drosophila full-length cDNA resource.</title>
        <authorList>
            <person name="Stapleton M."/>
            <person name="Carlson J.W."/>
            <person name="Brokstein P."/>
            <person name="Yu C."/>
            <person name="Champe M."/>
            <person name="George R.A."/>
            <person name="Guarin H."/>
            <person name="Kronmiller B."/>
            <person name="Pacleb J.M."/>
            <person name="Park S."/>
            <person name="Wan K.H."/>
            <person name="Rubin G.M."/>
            <person name="Celniker S.E."/>
        </authorList>
    </citation>
    <scope>NUCLEOTIDE SEQUENCE [LARGE SCALE MRNA]</scope>
    <source>
        <strain>Berkeley</strain>
        <tissue>Head</tissue>
    </source>
</reference>
<reference key="4">
    <citation type="journal article" date="2013" name="Nature">
        <title>Structures of the human and Drosophila 80S ribosome.</title>
        <authorList>
            <person name="Anger A.M."/>
            <person name="Armache J.P."/>
            <person name="Berninghausen O."/>
            <person name="Habeck M."/>
            <person name="Subklewe M."/>
            <person name="Wilson D.N."/>
            <person name="Beckmann R."/>
        </authorList>
    </citation>
    <scope>STRUCTURE BY ELECTRON MICROSCOPY (6.0 ANGSTROMS) OF THE 80S RIBOSOME</scope>
    <scope>SUBUNIT</scope>
    <scope>SUBCELLULAR LOCATION</scope>
</reference>
<name>RS29_DROME</name>
<keyword id="KW-0002">3D-structure</keyword>
<keyword id="KW-0963">Cytoplasm</keyword>
<keyword id="KW-0256">Endoplasmic reticulum</keyword>
<keyword id="KW-0479">Metal-binding</keyword>
<keyword id="KW-1185">Reference proteome</keyword>
<keyword id="KW-0687">Ribonucleoprotein</keyword>
<keyword id="KW-0689">Ribosomal protein</keyword>
<keyword id="KW-0862">Zinc</keyword>
<comment type="cofactor">
    <cofactor evidence="1">
        <name>Zn(2+)</name>
        <dbReference type="ChEBI" id="CHEBI:29105"/>
    </cofactor>
    <text evidence="1">Binds 1 zinc ion per subunit.</text>
</comment>
<comment type="subunit">
    <text evidence="4">Component of the 40S small ribosomal subunit.</text>
</comment>
<comment type="subcellular location">
    <subcellularLocation>
        <location evidence="1">Cytoplasm</location>
        <location evidence="1">Cytosol</location>
    </subcellularLocation>
    <subcellularLocation>
        <location evidence="6">Cytoplasm</location>
    </subcellularLocation>
    <subcellularLocation>
        <location evidence="2">Rough endoplasmic reticulum</location>
    </subcellularLocation>
    <text evidence="1 2">Detected on cytosolic polysomes (By similarity). Detected in ribosomes that are associated with the rough endoplasmic reticulum (By similarity).</text>
</comment>
<comment type="similarity">
    <text evidence="5">Belongs to the universal ribosomal protein uS14 family.</text>
</comment>
<comment type="sequence caution" evidence="5">
    <conflict type="erroneous initiation">
        <sequence resource="EMBL-CDS" id="AAL68340"/>
    </conflict>
</comment>
<protein>
    <recommendedName>
        <fullName evidence="5">Small ribosomal subunit protein uS14</fullName>
    </recommendedName>
    <alternativeName>
        <fullName>40S ribosomal protein S29</fullName>
    </alternativeName>
</protein>
<gene>
    <name type="primary">RpS29</name>
    <name type="ORF">CG8495</name>
</gene>
<sequence>MGFATLWYSHPRKYGQGSRCCRACSNRHGLIRKYGLNICRQCFREYANDIGFKKLD</sequence>
<accession>Q9VH69</accession>
<accession>Q7JYH9</accession>
<feature type="chain" id="PRO_0000131026" description="Small ribosomal subunit protein uS14">
    <location>
        <begin position="1"/>
        <end position="56"/>
    </location>
</feature>
<feature type="binding site" evidence="3">
    <location>
        <position position="21"/>
    </location>
    <ligand>
        <name>Zn(2+)</name>
        <dbReference type="ChEBI" id="CHEBI:29105"/>
    </ligand>
</feature>
<feature type="binding site" evidence="3">
    <location>
        <position position="24"/>
    </location>
    <ligand>
        <name>Zn(2+)</name>
        <dbReference type="ChEBI" id="CHEBI:29105"/>
    </ligand>
</feature>
<feature type="binding site" evidence="3">
    <location>
        <position position="39"/>
    </location>
    <ligand>
        <name>Zn(2+)</name>
        <dbReference type="ChEBI" id="CHEBI:29105"/>
    </ligand>
</feature>
<feature type="binding site" evidence="3">
    <location>
        <position position="42"/>
    </location>
    <ligand>
        <name>Zn(2+)</name>
        <dbReference type="ChEBI" id="CHEBI:29105"/>
    </ligand>
</feature>
<organism>
    <name type="scientific">Drosophila melanogaster</name>
    <name type="common">Fruit fly</name>
    <dbReference type="NCBI Taxonomy" id="7227"/>
    <lineage>
        <taxon>Eukaryota</taxon>
        <taxon>Metazoa</taxon>
        <taxon>Ecdysozoa</taxon>
        <taxon>Arthropoda</taxon>
        <taxon>Hexapoda</taxon>
        <taxon>Insecta</taxon>
        <taxon>Pterygota</taxon>
        <taxon>Neoptera</taxon>
        <taxon>Endopterygota</taxon>
        <taxon>Diptera</taxon>
        <taxon>Brachycera</taxon>
        <taxon>Muscomorpha</taxon>
        <taxon>Ephydroidea</taxon>
        <taxon>Drosophilidae</taxon>
        <taxon>Drosophila</taxon>
        <taxon>Sophophora</taxon>
    </lineage>
</organism>